<organism>
    <name type="scientific">Homo sapiens</name>
    <name type="common">Human</name>
    <dbReference type="NCBI Taxonomy" id="9606"/>
    <lineage>
        <taxon>Eukaryota</taxon>
        <taxon>Metazoa</taxon>
        <taxon>Chordata</taxon>
        <taxon>Craniata</taxon>
        <taxon>Vertebrata</taxon>
        <taxon>Euteleostomi</taxon>
        <taxon>Mammalia</taxon>
        <taxon>Eutheria</taxon>
        <taxon>Euarchontoglires</taxon>
        <taxon>Primates</taxon>
        <taxon>Haplorrhini</taxon>
        <taxon>Catarrhini</taxon>
        <taxon>Hominidae</taxon>
        <taxon>Homo</taxon>
    </lineage>
</organism>
<name>MA2B1_HUMAN</name>
<proteinExistence type="evidence at protein level"/>
<keyword id="KW-0025">Alternative splicing</keyword>
<keyword id="KW-0903">Direct protein sequencing</keyword>
<keyword id="KW-0225">Disease variant</keyword>
<keyword id="KW-1015">Disulfide bond</keyword>
<keyword id="KW-0325">Glycoprotein</keyword>
<keyword id="KW-0326">Glycosidase</keyword>
<keyword id="KW-0378">Hydrolase</keyword>
<keyword id="KW-0458">Lysosome</keyword>
<keyword id="KW-0479">Metal-binding</keyword>
<keyword id="KW-1267">Proteomics identification</keyword>
<keyword id="KW-1185">Reference proteome</keyword>
<keyword id="KW-0732">Signal</keyword>
<keyword id="KW-0862">Zinc</keyword>
<keyword id="KW-0865">Zymogen</keyword>
<gene>
    <name type="primary">MAN2B1</name>
    <name type="synonym">LAMAN</name>
    <name type="synonym">MANB</name>
</gene>
<feature type="signal peptide">
    <location>
        <begin position="1"/>
        <end position="49"/>
    </location>
</feature>
<feature type="chain" id="PRO_0000012069" description="Lysosomal alpha-mannosidase">
    <location>
        <begin position="50"/>
        <end position="1011"/>
    </location>
</feature>
<feature type="chain" id="PRO_0000012070" description="Lysosomal alpha-mannosidase A peptide">
    <location>
        <begin position="50"/>
        <end position="345"/>
    </location>
</feature>
<feature type="chain" id="PRO_0000012071" description="Lysosomal alpha-mannosidase B peptide">
    <location>
        <begin position="346"/>
        <end position="429"/>
    </location>
</feature>
<feature type="chain" id="PRO_0000012072" description="Lysosomal alpha-mannosidase C peptide">
    <location>
        <begin position="430"/>
        <end position="601"/>
    </location>
</feature>
<feature type="chain" id="PRO_0000012073" description="Lysosomal alpha-mannosidase D peptide">
    <location>
        <begin position="602"/>
        <end position="882"/>
    </location>
</feature>
<feature type="chain" id="PRO_0000012074" description="Lysosomal alpha-mannosidase E peptide">
    <location>
        <begin position="883"/>
        <end position="1011"/>
    </location>
</feature>
<feature type="active site" description="Nucleophile" evidence="1">
    <location>
        <position position="196"/>
    </location>
</feature>
<feature type="binding site" evidence="1">
    <location>
        <position position="72"/>
    </location>
    <ligand>
        <name>Zn(2+)</name>
        <dbReference type="ChEBI" id="CHEBI:29105"/>
    </ligand>
</feature>
<feature type="binding site" evidence="1">
    <location>
        <position position="74"/>
    </location>
    <ligand>
        <name>Zn(2+)</name>
        <dbReference type="ChEBI" id="CHEBI:29105"/>
    </ligand>
</feature>
<feature type="binding site" evidence="1">
    <location>
        <position position="196"/>
    </location>
    <ligand>
        <name>Zn(2+)</name>
        <dbReference type="ChEBI" id="CHEBI:29105"/>
    </ligand>
</feature>
<feature type="binding site" evidence="1">
    <location>
        <position position="446"/>
    </location>
    <ligand>
        <name>Zn(2+)</name>
        <dbReference type="ChEBI" id="CHEBI:29105"/>
    </ligand>
</feature>
<feature type="glycosylation site" description="N-linked (GlcNAc...) asparagine" evidence="2">
    <location>
        <position position="133"/>
    </location>
</feature>
<feature type="glycosylation site" description="N-linked (GlcNAc...) asparagine" evidence="2">
    <location>
        <position position="310"/>
    </location>
</feature>
<feature type="glycosylation site" description="N-linked (GlcNAc...) asparagine" evidence="6">
    <location>
        <position position="367"/>
    </location>
</feature>
<feature type="glycosylation site" description="N-linked (GlcNAc...) asparagine" evidence="2">
    <location>
        <position position="497"/>
    </location>
</feature>
<feature type="glycosylation site" description="N-linked (GlcNAc...) asparagine" evidence="2">
    <location>
        <position position="645"/>
    </location>
</feature>
<feature type="glycosylation site" description="N-linked (GlcNAc...) asparagine" evidence="2">
    <location>
        <position position="651"/>
    </location>
</feature>
<feature type="glycosylation site" description="N-linked (GlcNAc...) asparagine" evidence="2">
    <location>
        <position position="692"/>
    </location>
</feature>
<feature type="glycosylation site" description="N-linked (GlcNAc...) asparagine" evidence="6">
    <location>
        <position position="766"/>
    </location>
</feature>
<feature type="glycosylation site" description="N-linked (GlcNAc...) asparagine" evidence="2">
    <location>
        <position position="832"/>
    </location>
</feature>
<feature type="glycosylation site" description="N-linked (GlcNAc...) asparagine" evidence="4">
    <location>
        <position position="930"/>
    </location>
</feature>
<feature type="glycosylation site" description="N-linked (GlcNAc...) asparagine" evidence="2">
    <location>
        <position position="989"/>
    </location>
</feature>
<feature type="disulfide bond" evidence="1">
    <location>
        <begin position="55"/>
        <end position="358"/>
    </location>
</feature>
<feature type="disulfide bond" evidence="1">
    <location>
        <begin position="268"/>
        <end position="273"/>
    </location>
</feature>
<feature type="disulfide bond" evidence="1">
    <location>
        <begin position="412"/>
        <end position="472"/>
    </location>
</feature>
<feature type="disulfide bond" evidence="1">
    <location>
        <begin position="493"/>
        <end position="501"/>
    </location>
</feature>
<feature type="splice variant" id="VSP_047391" description="In isoform 2." evidence="11">
    <location>
        <position position="343"/>
    </location>
</feature>
<feature type="sequence variant" id="VAR_068034" description="In MANSA; results in less than 20% of wild-type enzyme activity; dbSNP:rs864621975." evidence="7">
    <original>C</original>
    <variation>F</variation>
    <location>
        <position position="55"/>
    </location>
</feature>
<feature type="sequence variant" id="VAR_003338" description="In MANSA; type II; dbSNP:rs387906261." evidence="8 9">
    <original>H</original>
    <variation>L</variation>
    <location>
        <position position="72"/>
    </location>
</feature>
<feature type="sequence variant" id="VAR_068035" description="In MANSA; results in less than 20% of wild-type enzyme activity; dbSNP:rs746702002." evidence="7">
    <original>D</original>
    <variation>E</variation>
    <location>
        <position position="74"/>
    </location>
</feature>
<feature type="sequence variant" id="VAR_068036" description="In MANSA; results in less than 20% of wild-type enzyme activity; dbSNP:rs754036398." evidence="7">
    <original>A</original>
    <variation>P</variation>
    <location>
        <position position="95"/>
    </location>
</feature>
<feature type="sequence variant" id="VAR_068037" description="In MANSA; results in less than 20% of wild-type enzyme activity; dbSNP:rs794727484." evidence="7">
    <original>Y</original>
    <variation>H</variation>
    <location>
        <position position="99"/>
    </location>
</feature>
<feature type="sequence variant" id="VAR_068038" description="In MANSA; results in less than 20% of wild-type enzyme activity; dbSNP:rs864621976." evidence="7">
    <original>D</original>
    <variation>N</variation>
    <location>
        <position position="159"/>
    </location>
</feature>
<feature type="sequence variant" id="VAR_068039" description="In MANSA; results in less than 20% of wild-type enzyme activity; dbSNP:rs864621977." evidence="7">
    <original>P</original>
    <variation>R</variation>
    <location>
        <position position="197"/>
    </location>
</feature>
<feature type="sequence variant" id="VAR_026412" description="In MANSA; no residual enzyme activity; dbSNP:rs864621978." evidence="5 7">
    <original>H</original>
    <variation>L</variation>
    <location>
        <position position="200"/>
    </location>
</feature>
<feature type="sequence variant" id="VAR_068040" description="In MANSA; reduced enzyme activity; dbSNP:rs772108001." evidence="7">
    <original>H</original>
    <variation>N</variation>
    <location>
        <position position="200"/>
    </location>
</feature>
<feature type="sequence variant" id="VAR_068041" description="In MANSA; reduced enzyme activity; dbSNP:rs864621979." evidence="7">
    <original>R</original>
    <variation>P</variation>
    <location>
        <position position="202"/>
    </location>
</feature>
<feature type="sequence variant" id="VAR_068042" description="In MANSA; reduced enzyme activity; dbSNP:rs763257568." evidence="7">
    <original>R</original>
    <variation>W</variation>
    <location>
        <position position="229"/>
    </location>
</feature>
<feature type="sequence variant" id="VAR_068043" description="In dbSNP:rs117843968." evidence="7">
    <original>P</original>
    <variation>L</variation>
    <location>
        <position position="248"/>
    </location>
</feature>
<feature type="sequence variant" id="VAR_049209" description="In dbSNP:rs3745650.">
    <original>A</original>
    <variation>S</variation>
    <location>
        <position position="250"/>
    </location>
</feature>
<feature type="sequence variant" id="VAR_068044" description="In MANSA; results in less than 20% of wild-type enzyme activity; dbSNP:rs746808159." evidence="7">
    <original>P</original>
    <variation>L</variation>
    <location>
        <position position="263"/>
    </location>
</feature>
<feature type="sequence variant" id="VAR_003339" description="In dbSNP:rs1054486." evidence="7 10">
    <original>L</original>
    <variation>V</variation>
    <location>
        <position position="278"/>
    </location>
</feature>
<feature type="sequence variant" id="VAR_068045" description="In dbSNP:rs45576136." evidence="7">
    <original>P</original>
    <variation>S</variation>
    <location>
        <position position="282"/>
    </location>
</feature>
<feature type="sequence variant" id="VAR_003340" description="In dbSNP:rs1054487." evidence="7 10">
    <original>T</original>
    <variation>I</variation>
    <location>
        <position position="312"/>
    </location>
</feature>
<feature type="sequence variant" id="VAR_068046" description="In MANSA; reduced enzyme activity; dbSNP:rs774034389." evidence="7">
    <original>S</original>
    <variation>L</variation>
    <location>
        <position position="318"/>
    </location>
</feature>
<feature type="sequence variant" id="VAR_003341" description="In dbSNP:rs1133330." evidence="7 10">
    <original>R</original>
    <variation>Q</variation>
    <location>
        <position position="337"/>
    </location>
</feature>
<feature type="sequence variant" id="VAR_068047" description="In MANSA." evidence="7">
    <location>
        <begin position="339"/>
        <end position="342"/>
    </location>
</feature>
<feature type="sequence variant" id="VAR_068048" description="In MANSA; results in less than 20% of wild-type enzyme activity; dbSNP:rs864621980." evidence="7">
    <original>L</original>
    <variation>P</variation>
    <location>
        <position position="352"/>
    </location>
</feature>
<feature type="sequence variant" id="VAR_003342" description="In MANSA; dbSNP:rs864621992." evidence="10">
    <original>T</original>
    <variation>P</variation>
    <location>
        <position position="355"/>
    </location>
</feature>
<feature type="sequence variant" id="VAR_003343" description="In MANSA; type I; dbSNP:rs121434333." evidence="9">
    <original>P</original>
    <variation>R</variation>
    <location>
        <position position="356"/>
    </location>
</feature>
<feature type="sequence variant" id="VAR_068049" description="In MANSA; reduced enzyme activity; dbSNP:rs864621981." evidence="7">
    <original>P</original>
    <variation>L</variation>
    <location>
        <position position="379"/>
    </location>
</feature>
<feature type="sequence variant" id="VAR_068050" description="In MANSA; results in less than 20% of wild-type enzyme activity; dbSNP:rs864621982." evidence="7">
    <original>G</original>
    <variation>C</variation>
    <location>
        <position position="390"/>
    </location>
</feature>
<feature type="sequence variant" id="VAR_003344" description="In MANSA; uncertain significance; dbSNP:rs370760999." evidence="7 10">
    <original>E</original>
    <variation>K</variation>
    <location>
        <position position="402"/>
    </location>
</feature>
<feature type="sequence variant" id="VAR_003345" description="In dbSNP:rs35836657." evidence="7 10">
    <original>N</original>
    <variation>S</variation>
    <location>
        <position position="413"/>
    </location>
</feature>
<feature type="sequence variant" id="VAR_068051" description="In MANSA; results in less than 20% of wild-type enzyme activity; dbSNP:rs772853856." evidence="7">
    <original>G</original>
    <variation>V</variation>
    <location>
        <position position="420"/>
    </location>
</feature>
<feature type="sequence variant" id="VAR_068052" description="In MANSA; results in less than 20% of wild-type enzyme activity; dbSNP:rs864621983." evidence="7">
    <original>H</original>
    <variation>Y</variation>
    <location>
        <position position="445"/>
    </location>
</feature>
<feature type="sequence variant" id="VAR_068053" description="In MANSA; reduced enzyme activity; dbSNP:rs368899357." evidence="7">
    <original>G</original>
    <variation>C</variation>
    <location>
        <position position="451"/>
    </location>
</feature>
<feature type="sequence variant" id="VAR_068054" description="In MANSA; reduced enzyme activity; dbSNP:rs864621984." evidence="7">
    <original>S</original>
    <variation>F</variation>
    <location>
        <position position="453"/>
    </location>
</feature>
<feature type="sequence variant" id="VAR_026413" description="In MANSA; dbSNP:rs864621984." evidence="3 7">
    <original>S</original>
    <variation>Y</variation>
    <location>
        <position position="453"/>
    </location>
</feature>
<feature type="sequence variant" id="VAR_068055" description="In MANSA; reduced enzyme activity; dbSNP:rs864621985." evidence="7">
    <original>V</original>
    <variation>E</variation>
    <location>
        <position position="457"/>
    </location>
</feature>
<feature type="sequence variant" id="VAR_049210" description="In dbSNP:rs34544747." evidence="7">
    <original>A</original>
    <variation>S</variation>
    <location>
        <position position="481"/>
    </location>
</feature>
<feature type="sequence variant" id="VAR_068056" description="In MANSA; reduced enzyme activity; dbSNP:rs747721968." evidence="7">
    <original>C</original>
    <variation>S</variation>
    <location>
        <position position="501"/>
    </location>
</feature>
<feature type="sequence variant" id="VAR_068057" description="In MANSA; results in less than 20% of wild-type enzyme activity; dbSNP:rs864621986." evidence="7">
    <original>L</original>
    <variation>P</variation>
    <location>
        <position position="565"/>
    </location>
</feature>
<feature type="sequence variant" id="VAR_068058" description="In dbSNP:rs75029862." evidence="7">
    <original>P</original>
    <variation>L</variation>
    <location>
        <position position="669"/>
    </location>
</feature>
<feature type="sequence variant" id="VAR_003346" description="In MANSA; dbSNP:rs864621993." evidence="10">
    <original>W</original>
    <variation>R</variation>
    <location>
        <position position="714"/>
    </location>
</feature>
<feature type="sequence variant" id="VAR_068059" description="In MANSA; results in less than 20% of wild-type enzyme activity; dbSNP:rs864621987." evidence="7">
    <original>T</original>
    <variation>R</variation>
    <location>
        <position position="745"/>
    </location>
</feature>
<feature type="sequence variant" id="VAR_003347" description="In MANSA; type II; dbSNP:rs80338680." evidence="9">
    <original>R</original>
    <variation>W</variation>
    <location>
        <position position="750"/>
    </location>
</feature>
<feature type="sequence variant" id="VAR_068060" description="In MANSA; results in less than 20% of wild-type enzyme activity; dbSNP:rs398123456." evidence="7">
    <original>G</original>
    <variation>R</variation>
    <location>
        <position position="800"/>
    </location>
</feature>
<feature type="sequence variant" id="VAR_068061" description="In MANSA; results in less than 20% of wild-type enzyme activity; dbSNP:rs398123456." evidence="7">
    <original>G</original>
    <variation>W</variation>
    <location>
        <position position="800"/>
    </location>
</feature>
<feature type="sequence variant" id="VAR_026414" description="In MANSA; no residual enzyme activity; dbSNP:rs864621994." evidence="5">
    <original>G</original>
    <variation>D</variation>
    <location>
        <position position="801"/>
    </location>
</feature>
<feature type="sequence variant" id="VAR_003348" description="In MANSA; dbSNP:rs80338681." evidence="10">
    <original>L</original>
    <variation>P</variation>
    <location>
        <position position="809"/>
    </location>
</feature>
<feature type="sequence variant" id="VAR_068062" description="In MANSA; results in less than 20% of wild-type enzyme activity.">
    <original>R</original>
    <variation>RHR</variation>
    <location>
        <position position="815"/>
    </location>
</feature>
<feature type="sequence variant" id="VAR_068063" description="In MANSA; results in less than 20% of wild-type enzyme activity; dbSNP:rs864621988." evidence="7">
    <original>G</original>
    <variation>R</variation>
    <location>
        <position position="891"/>
    </location>
</feature>
<feature type="sequence variant" id="VAR_068064" description="In MANSA; results in less than 20% of wild-type enzyme activity; dbSNP:rs864621989." evidence="7">
    <original>L</original>
    <variation>P</variation>
    <location>
        <position position="892"/>
    </location>
</feature>
<feature type="sequence variant" id="VAR_068065" description="In MANSA; results in less than 20% of wild-type enzyme activity; dbSNP:rs864621990." evidence="7">
    <original>R</original>
    <variation>C</variation>
    <location>
        <position position="916"/>
    </location>
</feature>
<feature type="sequence variant" id="VAR_068066" description="In MANSA; results in less than 20% of wild-type enzyme activity; dbSNP:rs758765126." evidence="7">
    <original>R</original>
    <variation>H</variation>
    <location>
        <position position="916"/>
    </location>
</feature>
<feature type="sequence variant" id="VAR_068067" description="In MANSA; results in less than 20% of wild-type enzyme activity; dbSNP:rs139041112." evidence="7">
    <original>R</original>
    <variation>P</variation>
    <location>
        <position position="950"/>
    </location>
</feature>
<feature type="sequence variant" id="VAR_068068" description="In MANSA; results in less than 20% of wild-type enzyme activity; dbSNP:rs768233248." evidence="7">
    <original>L</original>
    <variation>R</variation>
    <location>
        <position position="956"/>
    </location>
</feature>
<feature type="sequence variant" id="VAR_068069" description="In MANSA; results in less than 20% of wild-type enzyme activity; dbSNP:rs864621991." evidence="7">
    <original>F</original>
    <variation>S</variation>
    <location>
        <position position="1000"/>
    </location>
</feature>
<feature type="sequence conflict" description="In Ref. 3; AAC51362." evidence="11" ref="3">
    <location>
        <position position="3"/>
    </location>
</feature>
<feature type="sequence conflict" description="In Ref. 2; AAC34130." evidence="11" ref="2">
    <original>D</original>
    <variation>V</variation>
    <location>
        <position position="186"/>
    </location>
</feature>
<feature type="sequence conflict" description="In Ref. 7; AAC50812." evidence="11" ref="7">
    <original>P</original>
    <variation>H</variation>
    <location>
        <position position="384"/>
    </location>
</feature>
<dbReference type="EC" id="3.2.1.24"/>
<dbReference type="EMBL" id="U05572">
    <property type="protein sequence ID" value="AAB03816.1"/>
    <property type="status" value="ALT_INIT"/>
    <property type="molecule type" value="mRNA"/>
</dbReference>
<dbReference type="EMBL" id="U60266">
    <property type="protein sequence ID" value="AAC34130.1"/>
    <property type="molecule type" value="mRNA"/>
</dbReference>
<dbReference type="EMBL" id="U60899">
    <property type="protein sequence ID" value="AAC51362.1"/>
    <property type="molecule type" value="Genomic_DNA"/>
</dbReference>
<dbReference type="EMBL" id="U60885">
    <property type="protein sequence ID" value="AAC51362.1"/>
    <property type="status" value="JOINED"/>
    <property type="molecule type" value="Genomic_DNA"/>
</dbReference>
<dbReference type="EMBL" id="U60886">
    <property type="protein sequence ID" value="AAC51362.1"/>
    <property type="status" value="JOINED"/>
    <property type="molecule type" value="Genomic_DNA"/>
</dbReference>
<dbReference type="EMBL" id="U60887">
    <property type="protein sequence ID" value="AAC51362.1"/>
    <property type="status" value="JOINED"/>
    <property type="molecule type" value="Genomic_DNA"/>
</dbReference>
<dbReference type="EMBL" id="U60888">
    <property type="protein sequence ID" value="AAC51362.1"/>
    <property type="status" value="JOINED"/>
    <property type="molecule type" value="Genomic_DNA"/>
</dbReference>
<dbReference type="EMBL" id="U60889">
    <property type="protein sequence ID" value="AAC51362.1"/>
    <property type="status" value="JOINED"/>
    <property type="molecule type" value="Genomic_DNA"/>
</dbReference>
<dbReference type="EMBL" id="U60890">
    <property type="protein sequence ID" value="AAC51362.1"/>
    <property type="status" value="JOINED"/>
    <property type="molecule type" value="Genomic_DNA"/>
</dbReference>
<dbReference type="EMBL" id="U60891">
    <property type="protein sequence ID" value="AAC51362.1"/>
    <property type="status" value="JOINED"/>
    <property type="molecule type" value="Genomic_DNA"/>
</dbReference>
<dbReference type="EMBL" id="U60892">
    <property type="protein sequence ID" value="AAC51362.1"/>
    <property type="status" value="JOINED"/>
    <property type="molecule type" value="Genomic_DNA"/>
</dbReference>
<dbReference type="EMBL" id="U60893">
    <property type="protein sequence ID" value="AAC51362.1"/>
    <property type="status" value="JOINED"/>
    <property type="molecule type" value="Genomic_DNA"/>
</dbReference>
<dbReference type="EMBL" id="U60894">
    <property type="protein sequence ID" value="AAC51362.1"/>
    <property type="status" value="JOINED"/>
    <property type="molecule type" value="Genomic_DNA"/>
</dbReference>
<dbReference type="EMBL" id="U60895">
    <property type="protein sequence ID" value="AAC51362.1"/>
    <property type="status" value="JOINED"/>
    <property type="molecule type" value="Genomic_DNA"/>
</dbReference>
<dbReference type="EMBL" id="U60896">
    <property type="protein sequence ID" value="AAC51362.1"/>
    <property type="status" value="JOINED"/>
    <property type="molecule type" value="Genomic_DNA"/>
</dbReference>
<dbReference type="EMBL" id="U60897">
    <property type="protein sequence ID" value="AAC51362.1"/>
    <property type="status" value="JOINED"/>
    <property type="molecule type" value="Genomic_DNA"/>
</dbReference>
<dbReference type="EMBL" id="U60898">
    <property type="protein sequence ID" value="AAC51362.1"/>
    <property type="status" value="JOINED"/>
    <property type="molecule type" value="Genomic_DNA"/>
</dbReference>
<dbReference type="EMBL" id="AC010422">
    <property type="status" value="NOT_ANNOTATED_CDS"/>
    <property type="molecule type" value="Genomic_DNA"/>
</dbReference>
<dbReference type="EMBL" id="CH471106">
    <property type="protein sequence ID" value="EAW84279.1"/>
    <property type="molecule type" value="Genomic_DNA"/>
</dbReference>
<dbReference type="EMBL" id="BC000736">
    <property type="protein sequence ID" value="AAH00736.1"/>
    <property type="molecule type" value="mRNA"/>
</dbReference>
<dbReference type="EMBL" id="U68567">
    <property type="protein sequence ID" value="AAC50812.1"/>
    <property type="status" value="ALT_INIT"/>
    <property type="molecule type" value="mRNA"/>
</dbReference>
<dbReference type="CCDS" id="CCDS32919.1">
    <molecule id="O00754-1"/>
</dbReference>
<dbReference type="CCDS" id="CCDS54224.1">
    <molecule id="O00754-2"/>
</dbReference>
<dbReference type="RefSeq" id="NP_000519.2">
    <molecule id="O00754-1"/>
    <property type="nucleotide sequence ID" value="NM_000528.4"/>
</dbReference>
<dbReference type="RefSeq" id="NP_001166969.1">
    <molecule id="O00754-2"/>
    <property type="nucleotide sequence ID" value="NM_001173498.2"/>
</dbReference>
<dbReference type="SMR" id="O00754"/>
<dbReference type="BioGRID" id="110298">
    <property type="interactions" value="102"/>
</dbReference>
<dbReference type="FunCoup" id="O00754">
    <property type="interactions" value="593"/>
</dbReference>
<dbReference type="IntAct" id="O00754">
    <property type="interactions" value="29"/>
</dbReference>
<dbReference type="MINT" id="O00754"/>
<dbReference type="STRING" id="9606.ENSP00000395473"/>
<dbReference type="BindingDB" id="O00754"/>
<dbReference type="ChEMBL" id="CHEMBL4059"/>
<dbReference type="CAZy" id="GH38">
    <property type="family name" value="Glycoside Hydrolase Family 38"/>
</dbReference>
<dbReference type="GlyConnect" id="775">
    <property type="glycosylation" value="16 N-Linked glycans (6 sites)"/>
</dbReference>
<dbReference type="GlyCosmos" id="O00754">
    <property type="glycosylation" value="11 sites, 16 glycans"/>
</dbReference>
<dbReference type="GlyGen" id="O00754">
    <property type="glycosylation" value="14 sites, 62 N-linked glycans (10 sites), 1 N-linked;o-linked glycan (2 sites), 1 O-linked glycan (1 site)"/>
</dbReference>
<dbReference type="iPTMnet" id="O00754"/>
<dbReference type="PhosphoSitePlus" id="O00754"/>
<dbReference type="SwissPalm" id="O00754"/>
<dbReference type="BioMuta" id="MAN2B1"/>
<dbReference type="CPTAC" id="CPTAC-2225"/>
<dbReference type="jPOST" id="O00754"/>
<dbReference type="MassIVE" id="O00754"/>
<dbReference type="PaxDb" id="9606-ENSP00000395473"/>
<dbReference type="PeptideAtlas" id="O00754"/>
<dbReference type="ProteomicsDB" id="33811"/>
<dbReference type="ProteomicsDB" id="48018">
    <molecule id="O00754-1"/>
</dbReference>
<dbReference type="Pumba" id="O00754"/>
<dbReference type="Antibodypedia" id="26063">
    <property type="antibodies" value="53 antibodies from 11 providers"/>
</dbReference>
<dbReference type="DNASU" id="4125"/>
<dbReference type="Ensembl" id="ENST00000221363.9">
    <molecule id="O00754-2"/>
    <property type="protein sequence ID" value="ENSP00000221363.4"/>
    <property type="gene ID" value="ENSG00000104774.14"/>
</dbReference>
<dbReference type="Ensembl" id="ENST00000456935.7">
    <molecule id="O00754-1"/>
    <property type="protein sequence ID" value="ENSP00000395473.2"/>
    <property type="gene ID" value="ENSG00000104774.14"/>
</dbReference>
<dbReference type="GeneID" id="4125"/>
<dbReference type="KEGG" id="hsa:4125"/>
<dbReference type="MANE-Select" id="ENST00000456935.7">
    <property type="protein sequence ID" value="ENSP00000395473.2"/>
    <property type="RefSeq nucleotide sequence ID" value="NM_000528.4"/>
    <property type="RefSeq protein sequence ID" value="NP_000519.2"/>
</dbReference>
<dbReference type="UCSC" id="uc002mub.3">
    <molecule id="O00754-1"/>
    <property type="organism name" value="human"/>
</dbReference>
<dbReference type="AGR" id="HGNC:6826"/>
<dbReference type="CTD" id="4125"/>
<dbReference type="DisGeNET" id="4125"/>
<dbReference type="GeneCards" id="MAN2B1"/>
<dbReference type="GeneReviews" id="MAN2B1"/>
<dbReference type="HGNC" id="HGNC:6826">
    <property type="gene designation" value="MAN2B1"/>
</dbReference>
<dbReference type="HPA" id="ENSG00000104774">
    <property type="expression patterns" value="Low tissue specificity"/>
</dbReference>
<dbReference type="MalaCards" id="MAN2B1"/>
<dbReference type="MIM" id="248500">
    <property type="type" value="phenotype"/>
</dbReference>
<dbReference type="MIM" id="609458">
    <property type="type" value="gene"/>
</dbReference>
<dbReference type="neXtProt" id="NX_O00754"/>
<dbReference type="OpenTargets" id="ENSG00000104774"/>
<dbReference type="Orphanet" id="309288">
    <property type="disease" value="Alpha-mannosidosis, adult form"/>
</dbReference>
<dbReference type="Orphanet" id="309282">
    <property type="disease" value="Alpha-mannosidosis, infantile form"/>
</dbReference>
<dbReference type="PharmGKB" id="PA30575"/>
<dbReference type="VEuPathDB" id="HostDB:ENSG00000104774"/>
<dbReference type="eggNOG" id="KOG1959">
    <property type="taxonomic scope" value="Eukaryota"/>
</dbReference>
<dbReference type="GeneTree" id="ENSGT01030000234638"/>
<dbReference type="HOGENOM" id="CLU_004690_2_0_1"/>
<dbReference type="InParanoid" id="O00754"/>
<dbReference type="OMA" id="FIWRPSK"/>
<dbReference type="OrthoDB" id="2016903at2759"/>
<dbReference type="PAN-GO" id="O00754">
    <property type="GO annotations" value="2 GO annotations based on evolutionary models"/>
</dbReference>
<dbReference type="PhylomeDB" id="O00754"/>
<dbReference type="TreeFam" id="TF313840"/>
<dbReference type="BRENDA" id="3.2.1.24">
    <property type="organism ID" value="2681"/>
</dbReference>
<dbReference type="PathwayCommons" id="O00754"/>
<dbReference type="Reactome" id="R-HSA-6798695">
    <property type="pathway name" value="Neutrophil degranulation"/>
</dbReference>
<dbReference type="Reactome" id="R-HSA-8853383">
    <property type="pathway name" value="Lysosomal oligosaccharide catabolism"/>
</dbReference>
<dbReference type="SignaLink" id="O00754"/>
<dbReference type="BioGRID-ORCS" id="4125">
    <property type="hits" value="13 hits in 1160 CRISPR screens"/>
</dbReference>
<dbReference type="ChiTaRS" id="MAN2B1">
    <property type="organism name" value="human"/>
</dbReference>
<dbReference type="GenomeRNAi" id="4125"/>
<dbReference type="Pharos" id="O00754">
    <property type="development level" value="Tchem"/>
</dbReference>
<dbReference type="PRO" id="PR:O00754"/>
<dbReference type="Proteomes" id="UP000005640">
    <property type="component" value="Chromosome 19"/>
</dbReference>
<dbReference type="RNAct" id="O00754">
    <property type="molecule type" value="protein"/>
</dbReference>
<dbReference type="Bgee" id="ENSG00000104774">
    <property type="expression patterns" value="Expressed in bone marrow cell and 96 other cell types or tissues"/>
</dbReference>
<dbReference type="ExpressionAtlas" id="O00754">
    <property type="expression patterns" value="baseline and differential"/>
</dbReference>
<dbReference type="GO" id="GO:0035578">
    <property type="term" value="C:azurophil granule lumen"/>
    <property type="evidence" value="ECO:0000304"/>
    <property type="project" value="Reactome"/>
</dbReference>
<dbReference type="GO" id="GO:0070062">
    <property type="term" value="C:extracellular exosome"/>
    <property type="evidence" value="ECO:0007005"/>
    <property type="project" value="UniProtKB"/>
</dbReference>
<dbReference type="GO" id="GO:0005576">
    <property type="term" value="C:extracellular region"/>
    <property type="evidence" value="ECO:0000304"/>
    <property type="project" value="Reactome"/>
</dbReference>
<dbReference type="GO" id="GO:0005615">
    <property type="term" value="C:extracellular space"/>
    <property type="evidence" value="ECO:0000314"/>
    <property type="project" value="UniProtKB"/>
</dbReference>
<dbReference type="GO" id="GO:0043231">
    <property type="term" value="C:intracellular membrane-bounded organelle"/>
    <property type="evidence" value="ECO:0000314"/>
    <property type="project" value="HPA"/>
</dbReference>
<dbReference type="GO" id="GO:0043202">
    <property type="term" value="C:lysosomal lumen"/>
    <property type="evidence" value="ECO:0000304"/>
    <property type="project" value="Reactome"/>
</dbReference>
<dbReference type="GO" id="GO:0005764">
    <property type="term" value="C:lysosome"/>
    <property type="evidence" value="ECO:0000318"/>
    <property type="project" value="GO_Central"/>
</dbReference>
<dbReference type="GO" id="GO:0005654">
    <property type="term" value="C:nucleoplasm"/>
    <property type="evidence" value="ECO:0000314"/>
    <property type="project" value="HPA"/>
</dbReference>
<dbReference type="GO" id="GO:0004559">
    <property type="term" value="F:alpha-mannosidase activity"/>
    <property type="evidence" value="ECO:0000318"/>
    <property type="project" value="GO_Central"/>
</dbReference>
<dbReference type="GO" id="GO:0030246">
    <property type="term" value="F:carbohydrate binding"/>
    <property type="evidence" value="ECO:0007669"/>
    <property type="project" value="InterPro"/>
</dbReference>
<dbReference type="GO" id="GO:0046872">
    <property type="term" value="F:metal ion binding"/>
    <property type="evidence" value="ECO:0007669"/>
    <property type="project" value="UniProtKB-KW"/>
</dbReference>
<dbReference type="GO" id="GO:0007611">
    <property type="term" value="P:learning or memory"/>
    <property type="evidence" value="ECO:0007669"/>
    <property type="project" value="Ensembl"/>
</dbReference>
<dbReference type="GO" id="GO:0006013">
    <property type="term" value="P:mannose metabolic process"/>
    <property type="evidence" value="ECO:0007669"/>
    <property type="project" value="Ensembl"/>
</dbReference>
<dbReference type="GO" id="GO:0009313">
    <property type="term" value="P:oligosaccharide catabolic process"/>
    <property type="evidence" value="ECO:0007669"/>
    <property type="project" value="Ensembl"/>
</dbReference>
<dbReference type="GO" id="GO:0006517">
    <property type="term" value="P:protein deglycosylation"/>
    <property type="evidence" value="ECO:0000304"/>
    <property type="project" value="ProtInc"/>
</dbReference>
<dbReference type="GO" id="GO:0036211">
    <property type="term" value="P:protein modification process"/>
    <property type="evidence" value="ECO:0000314"/>
    <property type="project" value="UniProtKB"/>
</dbReference>
<dbReference type="CDD" id="cd10810">
    <property type="entry name" value="GH38N_AMII_LAM_like"/>
    <property type="match status" value="1"/>
</dbReference>
<dbReference type="FunFam" id="1.20.1270.50:FF:000002">
    <property type="entry name" value="Alpha-mannosidase"/>
    <property type="match status" value="1"/>
</dbReference>
<dbReference type="FunFam" id="1.20.1270.50:FF:000003">
    <property type="entry name" value="Alpha-mannosidase"/>
    <property type="match status" value="1"/>
</dbReference>
<dbReference type="FunFam" id="2.60.40.1180:FF:000016">
    <property type="entry name" value="Alpha-mannosidase"/>
    <property type="match status" value="1"/>
</dbReference>
<dbReference type="FunFam" id="2.60.40.1360:FF:000002">
    <property type="entry name" value="Alpha-mannosidase"/>
    <property type="match status" value="1"/>
</dbReference>
<dbReference type="FunFam" id="2.70.98.30:FF:000003">
    <property type="entry name" value="Alpha-mannosidase"/>
    <property type="match status" value="1"/>
</dbReference>
<dbReference type="FunFam" id="3.20.110.10:FF:000001">
    <property type="entry name" value="Alpha-mannosidase"/>
    <property type="match status" value="1"/>
</dbReference>
<dbReference type="Gene3D" id="2.60.40.1360">
    <property type="match status" value="1"/>
</dbReference>
<dbReference type="Gene3D" id="3.20.110.10">
    <property type="entry name" value="Glycoside hydrolase 38, N terminal domain"/>
    <property type="match status" value="1"/>
</dbReference>
<dbReference type="Gene3D" id="1.20.1270.50">
    <property type="entry name" value="Glycoside hydrolase family 38, central domain"/>
    <property type="match status" value="2"/>
</dbReference>
<dbReference type="Gene3D" id="2.60.40.1180">
    <property type="entry name" value="Golgi alpha-mannosidase II"/>
    <property type="match status" value="1"/>
</dbReference>
<dbReference type="Gene3D" id="2.70.98.30">
    <property type="entry name" value="Golgi alpha-mannosidase II, domain 4"/>
    <property type="match status" value="1"/>
</dbReference>
<dbReference type="InterPro" id="IPR011013">
    <property type="entry name" value="Gal_mutarotase_sf_dom"/>
</dbReference>
<dbReference type="InterPro" id="IPR041147">
    <property type="entry name" value="GH38_C"/>
</dbReference>
<dbReference type="InterPro" id="IPR011330">
    <property type="entry name" value="Glyco_hydro/deAcase_b/a-brl"/>
</dbReference>
<dbReference type="InterPro" id="IPR011682">
    <property type="entry name" value="Glyco_hydro_38_C"/>
</dbReference>
<dbReference type="InterPro" id="IPR015341">
    <property type="entry name" value="Glyco_hydro_38_cen"/>
</dbReference>
<dbReference type="InterPro" id="IPR037094">
    <property type="entry name" value="Glyco_hydro_38_cen_sf"/>
</dbReference>
<dbReference type="InterPro" id="IPR000602">
    <property type="entry name" value="Glyco_hydro_38_N"/>
</dbReference>
<dbReference type="InterPro" id="IPR027291">
    <property type="entry name" value="Glyco_hydro_38_N_sf"/>
</dbReference>
<dbReference type="InterPro" id="IPR028995">
    <property type="entry name" value="Glyco_hydro_57/38_cen_sf"/>
</dbReference>
<dbReference type="InterPro" id="IPR013780">
    <property type="entry name" value="Glyco_hydro_b"/>
</dbReference>
<dbReference type="InterPro" id="IPR050843">
    <property type="entry name" value="Glycosyl_Hydrlase_38"/>
</dbReference>
<dbReference type="InterPro" id="IPR048534">
    <property type="entry name" value="Man2a1-like_dom"/>
</dbReference>
<dbReference type="PANTHER" id="PTHR11607">
    <property type="entry name" value="ALPHA-MANNOSIDASE"/>
    <property type="match status" value="1"/>
</dbReference>
<dbReference type="PANTHER" id="PTHR11607:SF3">
    <property type="entry name" value="LYSOSOMAL ALPHA-MANNOSIDASE"/>
    <property type="match status" value="1"/>
</dbReference>
<dbReference type="Pfam" id="PF09261">
    <property type="entry name" value="Alpha-mann_mid"/>
    <property type="match status" value="1"/>
</dbReference>
<dbReference type="Pfam" id="PF17677">
    <property type="entry name" value="Glyco_hydro38C2"/>
    <property type="match status" value="1"/>
</dbReference>
<dbReference type="Pfam" id="PF07748">
    <property type="entry name" value="Glyco_hydro_38C"/>
    <property type="match status" value="1"/>
</dbReference>
<dbReference type="Pfam" id="PF01074">
    <property type="entry name" value="Glyco_hydro_38N"/>
    <property type="match status" value="1"/>
</dbReference>
<dbReference type="Pfam" id="PF21260">
    <property type="entry name" value="Laman-like_dom"/>
    <property type="match status" value="1"/>
</dbReference>
<dbReference type="SMART" id="SM00872">
    <property type="entry name" value="Alpha-mann_mid"/>
    <property type="match status" value="1"/>
</dbReference>
<dbReference type="SUPFAM" id="SSF88688">
    <property type="entry name" value="Families 57/38 glycoside transferase middle domain"/>
    <property type="match status" value="1"/>
</dbReference>
<dbReference type="SUPFAM" id="SSF74650">
    <property type="entry name" value="Galactose mutarotase-like"/>
    <property type="match status" value="1"/>
</dbReference>
<dbReference type="SUPFAM" id="SSF88713">
    <property type="entry name" value="Glycoside hydrolase/deacetylase"/>
    <property type="match status" value="1"/>
</dbReference>
<protein>
    <recommendedName>
        <fullName>Lysosomal alpha-mannosidase</fullName>
        <shortName>Laman</shortName>
        <ecNumber>3.2.1.24</ecNumber>
    </recommendedName>
    <alternativeName>
        <fullName>Lysosomal acid alpha-mannosidase</fullName>
    </alternativeName>
    <alternativeName>
        <fullName>Mannosidase alpha class 2B member 1</fullName>
    </alternativeName>
    <alternativeName>
        <fullName>Mannosidase alpha-B</fullName>
    </alternativeName>
    <component>
        <recommendedName>
            <fullName>Lysosomal alpha-mannosidase A peptide</fullName>
        </recommendedName>
    </component>
    <component>
        <recommendedName>
            <fullName>Lysosomal alpha-mannosidase B peptide</fullName>
        </recommendedName>
    </component>
    <component>
        <recommendedName>
            <fullName>Lysosomal alpha-mannosidase C peptide</fullName>
        </recommendedName>
    </component>
    <component>
        <recommendedName>
            <fullName>Lysosomal alpha-mannosidase D peptide</fullName>
        </recommendedName>
    </component>
    <component>
        <recommendedName>
            <fullName>Lysosomal alpha-mannosidase E peptide</fullName>
        </recommendedName>
    </component>
</protein>
<evidence type="ECO:0000250" key="1"/>
<evidence type="ECO:0000255" key="2"/>
<evidence type="ECO:0000269" key="3">
    <source>
    </source>
</evidence>
<evidence type="ECO:0000269" key="4">
    <source>
    </source>
</evidence>
<evidence type="ECO:0000269" key="5">
    <source>
    </source>
</evidence>
<evidence type="ECO:0000269" key="6">
    <source>
    </source>
</evidence>
<evidence type="ECO:0000269" key="7">
    <source>
    </source>
</evidence>
<evidence type="ECO:0000269" key="8">
    <source>
    </source>
</evidence>
<evidence type="ECO:0000269" key="9">
    <source>
    </source>
</evidence>
<evidence type="ECO:0000269" key="10">
    <source>
    </source>
</evidence>
<evidence type="ECO:0000305" key="11"/>
<sequence>MGAYARASGVCARGCLDSAGPWTMSRALRPPLPPLCFFLLLLAAAGARAGGYETCPTVQPNMLNVHLLPHTHDDVGWLKTVDQYFYGIKNDIQHAGVQYILDSVISALLADPTRRFIYVEIAFFSRWWHQQTNATQEVVRDLVRQGRLEFANGGWVMNDEAATHYGAIVDQMTLGLRFLEDTFGNDGRPRVAWHIDPFGHSREQASLFAQMGFDGFFFGRLDYQDKWVRMQKLEMEQVWRASTSLKPPTADLFTGVLPNGYNPPRNLCWDVLCVDQPLVEDPRSPEYNAKELVDYFLNVATAQGRYYRTNHTVMTMGSDFQYENANMWFKNLDKLIRLVNAQQAKGSSVHVLYSTPACYLWELNKANLTWSVKHDDFFPYADGPHQFWTGYFSSRPALKRYERLSYNFLQVCNQLEALVGLAANVGPYGSGDSAPLNEAMAVLQHHDAVSGTSRQHVANDYARQLAAGWGPCEVLLSNALARLRGFKDHFTFCQQLNISICPLSQTAARFQVIVYNPLGRKVNWMVRLPVSEGVFVVKDPNGRTVPSDVVIFPSSDSQAHPPELLFSASLPALGFSTYSVAQVPRWKPQARAPQPIPRRSWSPALTIENEHIRATFDPDTGLLMEIMNMNQQLLLPVRQTFFWYNASIGDNESDQASGAYIFRPNQQKPLPVSRWAQIHLVKTPLVQEVHQNFSAWCSQVVRLYPGQRHLELEWSVGPIPVGDTWGKEVISRFDTPLETKGRFYTDSNGREILERRRDYRPTWKLNQTEPVAGNYYPVNTRIYITDGNMQLTVLTDRSQGGSSLRDGSLELMVHRRLLKDDGRGVSEPLMENGSGAWVRGRHLVLLDTAQAAAAGHRLLAEQEVLAPQVVLAPGGGAAYNLGAPPRTQFSGLRRDLPPSVHLLTLASWGPEMVLLRLEHQFAVGEDSGRNLSAPVTLNLRDLFSTFTITRLQETTLVANQLREAASRLKWTTNTGPTPHQTPYQLDPANITLEPMEIRTFLASVQWKEVDG</sequence>
<reference key="1">
    <citation type="journal article" date="1994" name="Biochem. Biophys. Res. Commun.">
        <title>Human lysosomal alpha-mannosidase: isolation and nucleotide sequence of the full-length cDNA.</title>
        <authorList>
            <person name="Nebes V.L."/>
            <person name="Schmidt M.C."/>
        </authorList>
    </citation>
    <scope>NUCLEOTIDE SEQUENCE [MRNA] (ISOFORM 1)</scope>
</reference>
<reference key="2">
    <citation type="journal article" date="1997" name="Hum. Mol. Genet.">
        <title>Alpha-mannosidosis: functional cloning of the lysosomal alpha-mannosidase cDNA and identification of a mutation in two affected siblings.</title>
        <authorList>
            <person name="Nilssen O."/>
            <person name="Berg T."/>
            <person name="Riise H.M.F."/>
            <person name="Ramachandran U."/>
            <person name="Evjen G."/>
            <person name="Hansen G.M."/>
            <person name="Malm D."/>
            <person name="Tranebjaerg L."/>
            <person name="Tollersrud O.-K."/>
        </authorList>
    </citation>
    <scope>NUCLEOTIDE SEQUENCE [MRNA] (ISOFORM 1)</scope>
    <scope>PARTIAL PROTEIN SEQUENCE</scope>
    <scope>VARIANT MANSA LEU-72</scope>
    <source>
        <tissue>Lung</tissue>
        <tissue>Skin</tissue>
    </source>
</reference>
<reference key="3">
    <citation type="journal article" date="1997" name="Genomics">
        <title>Genomic structure of the human lysosomal alpha-mannosidase gene (MANB).</title>
        <authorList>
            <person name="Riise H.M.F."/>
            <person name="Berg T."/>
            <person name="Nilssen O."/>
            <person name="Romeo G."/>
            <person name="Tollersrud O.-K."/>
            <person name="Ceccherini I."/>
        </authorList>
    </citation>
    <scope>NUCLEOTIDE SEQUENCE [GENOMIC DNA] (ISOFORM 1)</scope>
</reference>
<reference key="4">
    <citation type="journal article" date="2004" name="Nature">
        <title>The DNA sequence and biology of human chromosome 19.</title>
        <authorList>
            <person name="Grimwood J."/>
            <person name="Gordon L.A."/>
            <person name="Olsen A.S."/>
            <person name="Terry A."/>
            <person name="Schmutz J."/>
            <person name="Lamerdin J.E."/>
            <person name="Hellsten U."/>
            <person name="Goodstein D."/>
            <person name="Couronne O."/>
            <person name="Tran-Gyamfi M."/>
            <person name="Aerts A."/>
            <person name="Altherr M."/>
            <person name="Ashworth L."/>
            <person name="Bajorek E."/>
            <person name="Black S."/>
            <person name="Branscomb E."/>
            <person name="Caenepeel S."/>
            <person name="Carrano A.V."/>
            <person name="Caoile C."/>
            <person name="Chan Y.M."/>
            <person name="Christensen M."/>
            <person name="Cleland C.A."/>
            <person name="Copeland A."/>
            <person name="Dalin E."/>
            <person name="Dehal P."/>
            <person name="Denys M."/>
            <person name="Detter J.C."/>
            <person name="Escobar J."/>
            <person name="Flowers D."/>
            <person name="Fotopulos D."/>
            <person name="Garcia C."/>
            <person name="Georgescu A.M."/>
            <person name="Glavina T."/>
            <person name="Gomez M."/>
            <person name="Gonzales E."/>
            <person name="Groza M."/>
            <person name="Hammon N."/>
            <person name="Hawkins T."/>
            <person name="Haydu L."/>
            <person name="Ho I."/>
            <person name="Huang W."/>
            <person name="Israni S."/>
            <person name="Jett J."/>
            <person name="Kadner K."/>
            <person name="Kimball H."/>
            <person name="Kobayashi A."/>
            <person name="Larionov V."/>
            <person name="Leem S.-H."/>
            <person name="Lopez F."/>
            <person name="Lou Y."/>
            <person name="Lowry S."/>
            <person name="Malfatti S."/>
            <person name="Martinez D."/>
            <person name="McCready P.M."/>
            <person name="Medina C."/>
            <person name="Morgan J."/>
            <person name="Nelson K."/>
            <person name="Nolan M."/>
            <person name="Ovcharenko I."/>
            <person name="Pitluck S."/>
            <person name="Pollard M."/>
            <person name="Popkie A.P."/>
            <person name="Predki P."/>
            <person name="Quan G."/>
            <person name="Ramirez L."/>
            <person name="Rash S."/>
            <person name="Retterer J."/>
            <person name="Rodriguez A."/>
            <person name="Rogers S."/>
            <person name="Salamov A."/>
            <person name="Salazar A."/>
            <person name="She X."/>
            <person name="Smith D."/>
            <person name="Slezak T."/>
            <person name="Solovyev V."/>
            <person name="Thayer N."/>
            <person name="Tice H."/>
            <person name="Tsai M."/>
            <person name="Ustaszewska A."/>
            <person name="Vo N."/>
            <person name="Wagner M."/>
            <person name="Wheeler J."/>
            <person name="Wu K."/>
            <person name="Xie G."/>
            <person name="Yang J."/>
            <person name="Dubchak I."/>
            <person name="Furey T.S."/>
            <person name="DeJong P."/>
            <person name="Dickson M."/>
            <person name="Gordon D."/>
            <person name="Eichler E.E."/>
            <person name="Pennacchio L.A."/>
            <person name="Richardson P."/>
            <person name="Stubbs L."/>
            <person name="Rokhsar D.S."/>
            <person name="Myers R.M."/>
            <person name="Rubin E.M."/>
            <person name="Lucas S.M."/>
        </authorList>
    </citation>
    <scope>NUCLEOTIDE SEQUENCE [LARGE SCALE GENOMIC DNA]</scope>
</reference>
<reference key="5">
    <citation type="submission" date="2005-07" db="EMBL/GenBank/DDBJ databases">
        <authorList>
            <person name="Mural R.J."/>
            <person name="Istrail S."/>
            <person name="Sutton G.G."/>
            <person name="Florea L."/>
            <person name="Halpern A.L."/>
            <person name="Mobarry C.M."/>
            <person name="Lippert R."/>
            <person name="Walenz B."/>
            <person name="Shatkay H."/>
            <person name="Dew I."/>
            <person name="Miller J.R."/>
            <person name="Flanigan M.J."/>
            <person name="Edwards N.J."/>
            <person name="Bolanos R."/>
            <person name="Fasulo D."/>
            <person name="Halldorsson B.V."/>
            <person name="Hannenhalli S."/>
            <person name="Turner R."/>
            <person name="Yooseph S."/>
            <person name="Lu F."/>
            <person name="Nusskern D.R."/>
            <person name="Shue B.C."/>
            <person name="Zheng X.H."/>
            <person name="Zhong F."/>
            <person name="Delcher A.L."/>
            <person name="Huson D.H."/>
            <person name="Kravitz S.A."/>
            <person name="Mouchard L."/>
            <person name="Reinert K."/>
            <person name="Remington K.A."/>
            <person name="Clark A.G."/>
            <person name="Waterman M.S."/>
            <person name="Eichler E.E."/>
            <person name="Adams M.D."/>
            <person name="Hunkapiller M.W."/>
            <person name="Myers E.W."/>
            <person name="Venter J.C."/>
        </authorList>
    </citation>
    <scope>NUCLEOTIDE SEQUENCE [LARGE SCALE GENOMIC DNA]</scope>
</reference>
<reference key="6">
    <citation type="journal article" date="2004" name="Genome Res.">
        <title>The status, quality, and expansion of the NIH full-length cDNA project: the Mammalian Gene Collection (MGC).</title>
        <authorList>
            <consortium name="The MGC Project Team"/>
        </authorList>
    </citation>
    <scope>NUCLEOTIDE SEQUENCE [LARGE SCALE MRNA] (ISOFORM 1)</scope>
    <source>
        <tissue>Placenta</tissue>
    </source>
</reference>
<reference key="7">
    <citation type="journal article" date="1996" name="J. Biol. Chem.">
        <title>Cloning, expression, purification, and characterization of the human broad specificity lysosomal acid alpha-mannosidase.</title>
        <authorList>
            <person name="Liao Y.-F."/>
            <person name="Lal A."/>
            <person name="Moremen K.W."/>
        </authorList>
    </citation>
    <scope>NUCLEOTIDE SEQUENCE [MRNA] OF 9-1010 (ISOFORM 1)</scope>
    <source>
        <tissue>Spleen</tissue>
    </source>
</reference>
<reference key="8">
    <citation type="journal article" date="1995" name="Biochem. J.">
        <title>Partial sequence of the purified protein confirms the identity of cDNA coding for human lysosomal alpha-mannosidase B.</title>
        <authorList>
            <person name="Emiliani C."/>
            <person name="Martino S."/>
            <person name="Stirling J.L."/>
            <person name="Maras B."/>
            <person name="Orlacchio A."/>
        </authorList>
    </citation>
    <scope>PARTIAL PROTEIN SEQUENCE</scope>
</reference>
<reference key="9">
    <citation type="journal article" date="2003" name="Nat. Biotechnol.">
        <title>Identification and quantification of N-linked glycoproteins using hydrazide chemistry, stable isotope labeling and mass spectrometry.</title>
        <authorList>
            <person name="Zhang H."/>
            <person name="Li X.-J."/>
            <person name="Martin D.B."/>
            <person name="Aebersold R."/>
        </authorList>
    </citation>
    <scope>GLYCOSYLATION AT ASN-930</scope>
</reference>
<reference key="10">
    <citation type="journal article" date="2009" name="J. Proteome Res.">
        <title>Glycoproteomics analysis of human liver tissue by combination of multiple enzyme digestion and hydrazide chemistry.</title>
        <authorList>
            <person name="Chen R."/>
            <person name="Jiang X."/>
            <person name="Sun D."/>
            <person name="Han G."/>
            <person name="Wang F."/>
            <person name="Ye M."/>
            <person name="Wang L."/>
            <person name="Zou H."/>
        </authorList>
    </citation>
    <scope>GLYCOSYLATION [LARGE SCALE ANALYSIS] AT ASN-367 AND ASN-766</scope>
    <source>
        <tissue>Liver</tissue>
    </source>
</reference>
<reference key="11">
    <citation type="journal article" date="2011" name="BMC Syst. Biol.">
        <title>Initial characterization of the human central proteome.</title>
        <authorList>
            <person name="Burkard T.R."/>
            <person name="Planyavsky M."/>
            <person name="Kaupe I."/>
            <person name="Breitwieser F.P."/>
            <person name="Buerckstuemmer T."/>
            <person name="Bennett K.L."/>
            <person name="Superti-Furga G."/>
            <person name="Colinge J."/>
        </authorList>
    </citation>
    <scope>IDENTIFICATION BY MASS SPECTROMETRY [LARGE SCALE ANALYSIS]</scope>
</reference>
<reference key="12">
    <citation type="journal article" date="2014" name="J. Proteomics">
        <title>An enzyme assisted RP-RPLC approach for in-depth analysis of human liver phosphoproteome.</title>
        <authorList>
            <person name="Bian Y."/>
            <person name="Song C."/>
            <person name="Cheng K."/>
            <person name="Dong M."/>
            <person name="Wang F."/>
            <person name="Huang J."/>
            <person name="Sun D."/>
            <person name="Wang L."/>
            <person name="Ye M."/>
            <person name="Zou H."/>
        </authorList>
    </citation>
    <scope>IDENTIFICATION BY MASS SPECTROMETRY [LARGE SCALE ANALYSIS]</scope>
    <source>
        <tissue>Liver</tissue>
    </source>
</reference>
<reference key="13">
    <citation type="journal article" date="2015" name="Proteomics">
        <title>N-terminome analysis of the human mitochondrial proteome.</title>
        <authorList>
            <person name="Vaca Jacome A.S."/>
            <person name="Rabilloud T."/>
            <person name="Schaeffer-Reiss C."/>
            <person name="Rompais M."/>
            <person name="Ayoub D."/>
            <person name="Lane L."/>
            <person name="Bairoch A."/>
            <person name="Van Dorsselaer A."/>
            <person name="Carapito C."/>
        </authorList>
    </citation>
    <scope>IDENTIFICATION BY MASS SPECTROMETRY [LARGE SCALE ANALYSIS]</scope>
</reference>
<reference key="14">
    <citation type="journal article" date="1998" name="Am. J. Hum. Genet.">
        <title>Missense and nonsense mutations in the lysosomal alpha-mannosidase gene (MANB) in severe and mild forms of alpha-mannosidosis.</title>
        <authorList>
            <person name="Gotoda Y."/>
            <person name="Wakamatsu N."/>
            <person name="Kawai H."/>
            <person name="Nishida Y."/>
            <person name="Matsumoto T."/>
        </authorList>
    </citation>
    <scope>VARIANTS MANSA LEU-72; ARG-356 AND TRP-750</scope>
</reference>
<reference key="15">
    <citation type="journal article" date="1999" name="Am. J. Hum. Genet.">
        <title>Spectrum of mutations in alpha-mannosidosis.</title>
        <authorList>
            <person name="Berg T."/>
            <person name="Riise H.M.F."/>
            <person name="Hansen G.M."/>
            <person name="Malm D."/>
            <person name="Tranebjaerg L."/>
            <person name="Tollersrud O.-K."/>
            <person name="Nilssen O."/>
        </authorList>
    </citation>
    <scope>VARIANTS MANSA PRO-355; LYS-402; ARG-714 AND PRO-809</scope>
    <scope>VARIANTS VAL-278; ILE-312; GLN-337 AND SER-413</scope>
</reference>
<reference key="16">
    <citation type="journal article" date="2003" name="Turk. J. Pediatr.">
        <title>Alpha-mannosidosis and mutational analysis in a Turkish patient.</title>
        <authorList>
            <person name="Oelmez A."/>
            <person name="Nilssen O."/>
            <person name="Coskun T."/>
            <person name="Klenow H."/>
        </authorList>
    </citation>
    <scope>VARIANT MANSA TYR-453</scope>
</reference>
<reference key="17">
    <citation type="journal article" date="2005" name="Hum. Mutat.">
        <title>Identification and characterization of five novel MAN2B1 mutations in Italian patients with alpha-mannosidosis.</title>
        <authorList>
            <person name="Sbaragli M."/>
            <person name="Bibi L."/>
            <person name="Pittis M.G."/>
            <person name="Balducci C."/>
            <person name="Heikinheimo P."/>
            <person name="Ricci R."/>
            <person name="Antuzzi D."/>
            <person name="Parini R."/>
            <person name="Spaccini L."/>
            <person name="Bembi B."/>
            <person name="Beccari T."/>
        </authorList>
    </citation>
    <scope>VARIANTS MANSA LEU-200 AND ASP-801</scope>
    <scope>CHARACTERIZATION OF VARIANTS MANSA LEU-200 AND ASP-801</scope>
</reference>
<reference key="18">
    <citation type="journal article" date="2012" name="Hum. Mutat.">
        <title>Identification of 83 novel alpha-mannosidosis-associated sequence variants: functional analysis of MAN2B1 missense mutations.</title>
        <authorList>
            <person name="Riise Stensland H.M."/>
            <person name="Klenow H.B."/>
            <person name="Van Nguyen L."/>
            <person name="Hansen G.M."/>
            <person name="Malm D."/>
            <person name="Nilssen O."/>
        </authorList>
    </citation>
    <scope>VARIANTS MANSA PHE-55; GLU-74; PRO-95; HIS-99; ASN-159; ARG-197; ASN-200; LEU-200; PRO-202; TRP-229; LEU-263; LEU-318; 339-VAL--GLN-342 DEL; PRO-352; LEU-379; CYS-390; LYS-402; VAL-420; TYR-445; CYS-451; TYR-453; PHE-453; GLU-457; SER-501; PRO-565; ARG-745; ARG-800; TRP-800; HIS-ARG-815 INS; ARG-891; PRO-892; CYS-916; HIS-916; PRO-950; ARG-956 AND SER-1000</scope>
    <scope>VARIANTS LEU-248; VAL-278; SER-282; ILE-312; GLN-337; SER-413; SER-481 AND LEU-669</scope>
    <scope>CHARACTERIZATION OF VARIANTS MANSA PHE-55; GLU-74; PRO-95; HIS-99; ASN-159; ARG-197; ASN-200; LEU-200; PRO-202; TRP-229; LEU-263; LEU-318; PRO-352; LEU-379; CYS-390; LYS-402; VAL-420; TYR-445; CYS-451; TYR-453; PHE-453; GLU-457; SER-501; PRO-565; ARG-745; ARG-800; TRP-800; HIS-ARG-815 INS; ARG-891; PRO-892; CYS-916; HIS-916; PRO-950; ARG-956 AND SER-1000</scope>
</reference>
<comment type="function">
    <text>Necessary for the catabolism of N-linked carbohydrates released during glycoprotein turnover. Cleaves all known types of alpha-mannosidic linkages.</text>
</comment>
<comment type="catalytic activity">
    <reaction>
        <text>Hydrolysis of terminal, non-reducing alpha-D-mannose residues in alpha-D-mannosides.</text>
        <dbReference type="EC" id="3.2.1.24"/>
    </reaction>
</comment>
<comment type="cofactor">
    <cofactor evidence="1">
        <name>Zn(2+)</name>
        <dbReference type="ChEBI" id="CHEBI:29105"/>
    </cofactor>
    <text evidence="1">Binds 1 zinc ion per subunit.</text>
</comment>
<comment type="subcellular location">
    <subcellularLocation>
        <location>Lysosome</location>
    </subcellularLocation>
</comment>
<comment type="alternative products">
    <event type="alternative splicing"/>
    <isoform>
        <id>O00754-1</id>
        <name>1</name>
        <sequence type="displayed"/>
    </isoform>
    <isoform>
        <id>O00754-2</id>
        <name>2</name>
        <sequence type="described" ref="VSP_047391"/>
    </isoform>
</comment>
<comment type="PTM">
    <text>First processed into 3 peptides of 70 kDa, 42 kDa (D) and 13/15 kDa (E). The 70 kDa peptide is further processed into three peptides (A, B and C). The A, B and C peptides are disulfide-linked.</text>
</comment>
<comment type="PTM">
    <text evidence="4 6">Heavily glycosylated.</text>
</comment>
<comment type="disease" evidence="3 5 7 8 9 10">
    <disease id="DI-01921">
        <name>Mannosidosis, alpha B, lysosomal</name>
        <acronym>MANSA</acronym>
        <description>A lysosomal storage disease characterized by accumulation of unbranched oligosaccharide chains. This accumulation is expressed histologically as cytoplasmic vacuolation predominantly in the CNS and parenchymatous organs. Depending on the clinical findings at the age of onset, a severe infantile (type I) and a mild juvenile (type II) form of alpha-mannosidosis are recognized. There is considerable variation in the clinical expression with intellectual disability, recurrent infections, impaired hearing and Hurler-like skeletal changes being the most consistent abnormalities.</description>
        <dbReference type="MIM" id="248500"/>
    </disease>
    <text>The disease is caused by variants affecting the gene represented in this entry.</text>
</comment>
<comment type="similarity">
    <text evidence="11">Belongs to the glycosyl hydrolase 38 family.</text>
</comment>
<comment type="sequence caution" evidence="11">
    <conflict type="erroneous initiation">
        <sequence resource="EMBL-CDS" id="AAB03816"/>
    </conflict>
    <text>Truncated N-terminus.</text>
</comment>
<comment type="sequence caution" evidence="11">
    <conflict type="erroneous initiation">
        <sequence resource="EMBL-CDS" id="AAC50812"/>
    </conflict>
    <text>Truncated N-terminus.</text>
</comment>
<comment type="online information" name="Mendelian genes mannosidase, alpha, class 2B, member 1 (MAN2B1)">
    <link uri="https://databases.lovd.nl/shared/genes/MAN2B1"/>
    <text>Leiden Open Variation Database (LOVD)</text>
</comment>
<accession>O00754</accession>
<accession>G5E928</accession>
<accession>O15330</accession>
<accession>Q16680</accession>
<accession>Q93094</accession>
<accession>Q9BW13</accession>